<name>LAN2_PYRDE</name>
<accession>P0DXV4</accession>
<proteinExistence type="inferred from homology"/>
<reference key="1">
    <citation type="journal article" date="2021" name="J. Am. Chem. Soc.">
        <title>Targeted genome mining reveals the biosynthetic gene clusters of natural product CYP51 inhibitors.</title>
        <authorList>
            <person name="Liu N."/>
            <person name="Abramyan E.D."/>
            <person name="Cheng W."/>
            <person name="Perlatti B."/>
            <person name="Harvey C.J.B."/>
            <person name="Bills G.F."/>
            <person name="Tang Y."/>
        </authorList>
    </citation>
    <scope>NUCLEOTIDE SEQUENCE [GENOMIC DNA]</scope>
    <scope>FUNCTION</scope>
    <scope>PATHWAY</scope>
    <source>
        <strain>TTI-1096</strain>
    </source>
</reference>
<sequence>MSPHISPSKDTPSQRLPIPLSLPTHLGLLAKAYGVPPASILQLAWGLVLRCYFTTSSSRWGTIDMAHEYKEKKNLPIRCEVLELDDTRSIGWILQNWNDPSVHRHLPAEEDTSNVPVSAGSIVILTEDAKDLEVLRDFELTAEWIICFSTSTEKPLLRLSWRPDVIHSELASHLAQLLERALDTTFLSPDIPLSQINLFSILDHQKLLQWNHQYPQSVNRLVHEMFEDMVAARPQATAVAAWDGEVTYQQLDRLSTRLAIKLQTIDLQPESIVALCFEKSVWAIVAMLGVLRAGGAFLHIDPKHPTARQQAMISTTAARIILCSEQTRDTVSRFDSESLSLVVDRKMFAQEPDHKQVALPSPNNLGPRNAAYIVCTSGSTGLPKAIVVEHVSLCTSVTAQAEAMAVGGESRILQYAAYTFDVSVGDVFTALTHGACVCIPSDWERTQDLVGAINRLDVNQACLTSTVASFLTPMNVPKLQKLTLGGEPASKQCIDLWSGKVALKNVYGPAECTVWCVIQKNASSEIPASNIGRGIGARTWIVHPENHNQLMPIGAVGELLIEGPLVARGYLNDAERTTAVFLERAPSWLATFGPLPPQTRFYKTGDLARFEQNGTLFFEGRKDTQVKLRGQRIELGEIEYQIQQACNPVPPLAVELIETKDLQAPLLGAFITWTGGLEISLDQSAVPNGLGPDLDARSHFNELVSRIQANIDRTLPPYMMPGLYIPVQKLPLSTSGKLDRKVLRQYCTQHTRSFLTASEAESSDVIADDATKDDVALHEIVNPGEITLAQLWAHALGRRMESINAKDNFLSLGGDSLAAMRLVNLAARDAQVTLTVANIFESPVLADQARLLRPLSKTKSLAPFELMTRGEASIEDIVGFAAQQCRLLPAQIEDVYPCTPLQEEMMRDSLSNDRTQMGQEVVQISEELDLVRYQVACASVYRRFPILRTRFIEHSGRLVQVVVREDLCWKQPTSLAEYKALDSRERPALGKPLTRWALTSDGTHFILSLHHAMFDGITLGQIQGAIYAVYQCIPLPPPSVSFATFLAHLDDQNAPLSQESQRFWQSYLCPSASLDASITPETQKIDRPRASCGTQRLVQFTSGEVSALQRHGLTEATLVRGAWACTLARHQQKPHASAFSDVIFGTMLTGRNFHLPGVDMLAAPSLTHVPIRIRIDEGDLNGHSARALLARVQADATAMIPYEHDGMNRIRSIEVQTRAVFNRIRTLLVIQPIPEGLTSVSTSPFPGSIVSGPRVEAKEMGHFHWYGLLVECTLLPTKGFFVRVSYDNKMFGTEQVESLLDDYSTTLHTLANGLMDTDIPASLHV</sequence>
<dbReference type="EC" id="6.3.2.-" evidence="6"/>
<dbReference type="EMBL" id="MW768702">
    <property type="protein sequence ID" value="QUF61542.1"/>
    <property type="molecule type" value="Genomic_DNA"/>
</dbReference>
<dbReference type="GO" id="GO:0005737">
    <property type="term" value="C:cytoplasm"/>
    <property type="evidence" value="ECO:0007669"/>
    <property type="project" value="TreeGrafter"/>
</dbReference>
<dbReference type="GO" id="GO:0016874">
    <property type="term" value="F:ligase activity"/>
    <property type="evidence" value="ECO:0007669"/>
    <property type="project" value="UniProtKB-KW"/>
</dbReference>
<dbReference type="GO" id="GO:0031177">
    <property type="term" value="F:phosphopantetheine binding"/>
    <property type="evidence" value="ECO:0007669"/>
    <property type="project" value="InterPro"/>
</dbReference>
<dbReference type="GO" id="GO:0043041">
    <property type="term" value="P:amino acid activation for nonribosomal peptide biosynthetic process"/>
    <property type="evidence" value="ECO:0007669"/>
    <property type="project" value="TreeGrafter"/>
</dbReference>
<dbReference type="GO" id="GO:0044550">
    <property type="term" value="P:secondary metabolite biosynthetic process"/>
    <property type="evidence" value="ECO:0007669"/>
    <property type="project" value="TreeGrafter"/>
</dbReference>
<dbReference type="CDD" id="cd05918">
    <property type="entry name" value="A_NRPS_SidN3_like"/>
    <property type="match status" value="1"/>
</dbReference>
<dbReference type="CDD" id="cd19545">
    <property type="entry name" value="FUM14_C_NRPS-like"/>
    <property type="match status" value="1"/>
</dbReference>
<dbReference type="FunFam" id="3.30.300.30:FF:000015">
    <property type="entry name" value="Nonribosomal peptide synthase SidD"/>
    <property type="match status" value="1"/>
</dbReference>
<dbReference type="FunFam" id="3.40.50.12780:FF:000014">
    <property type="entry name" value="Nonribosomal peptide synthetase 1"/>
    <property type="match status" value="1"/>
</dbReference>
<dbReference type="Gene3D" id="3.30.300.30">
    <property type="match status" value="1"/>
</dbReference>
<dbReference type="Gene3D" id="1.10.1200.10">
    <property type="entry name" value="ACP-like"/>
    <property type="match status" value="1"/>
</dbReference>
<dbReference type="Gene3D" id="3.30.559.10">
    <property type="entry name" value="Chloramphenicol acetyltransferase-like domain"/>
    <property type="match status" value="1"/>
</dbReference>
<dbReference type="Gene3D" id="3.40.50.12780">
    <property type="entry name" value="N-terminal domain of ligase-like"/>
    <property type="match status" value="1"/>
</dbReference>
<dbReference type="Gene3D" id="3.30.559.30">
    <property type="entry name" value="Nonribosomal peptide synthetase, condensation domain"/>
    <property type="match status" value="1"/>
</dbReference>
<dbReference type="InterPro" id="IPR010071">
    <property type="entry name" value="AA_adenyl_dom"/>
</dbReference>
<dbReference type="InterPro" id="IPR036736">
    <property type="entry name" value="ACP-like_sf"/>
</dbReference>
<dbReference type="InterPro" id="IPR045851">
    <property type="entry name" value="AMP-bd_C_sf"/>
</dbReference>
<dbReference type="InterPro" id="IPR020845">
    <property type="entry name" value="AMP-binding_CS"/>
</dbReference>
<dbReference type="InterPro" id="IPR000873">
    <property type="entry name" value="AMP-dep_synth/lig_dom"/>
</dbReference>
<dbReference type="InterPro" id="IPR042099">
    <property type="entry name" value="ANL_N_sf"/>
</dbReference>
<dbReference type="InterPro" id="IPR023213">
    <property type="entry name" value="CAT-like_dom_sf"/>
</dbReference>
<dbReference type="InterPro" id="IPR001242">
    <property type="entry name" value="Condensatn"/>
</dbReference>
<dbReference type="InterPro" id="IPR020806">
    <property type="entry name" value="PKS_PP-bd"/>
</dbReference>
<dbReference type="InterPro" id="IPR009081">
    <property type="entry name" value="PP-bd_ACP"/>
</dbReference>
<dbReference type="InterPro" id="IPR006162">
    <property type="entry name" value="Ppantetheine_attach_site"/>
</dbReference>
<dbReference type="NCBIfam" id="TIGR01733">
    <property type="entry name" value="AA-adenyl-dom"/>
    <property type="match status" value="1"/>
</dbReference>
<dbReference type="PANTHER" id="PTHR45527:SF16">
    <property type="entry name" value="NONRIBOSOMAL PEPTIDE SYNTHASE ATNA-RELATED"/>
    <property type="match status" value="1"/>
</dbReference>
<dbReference type="PANTHER" id="PTHR45527">
    <property type="entry name" value="NONRIBOSOMAL PEPTIDE SYNTHETASE"/>
    <property type="match status" value="1"/>
</dbReference>
<dbReference type="Pfam" id="PF00501">
    <property type="entry name" value="AMP-binding"/>
    <property type="match status" value="1"/>
</dbReference>
<dbReference type="Pfam" id="PF00668">
    <property type="entry name" value="Condensation"/>
    <property type="match status" value="1"/>
</dbReference>
<dbReference type="Pfam" id="PF00550">
    <property type="entry name" value="PP-binding"/>
    <property type="match status" value="1"/>
</dbReference>
<dbReference type="SMART" id="SM00823">
    <property type="entry name" value="PKS_PP"/>
    <property type="match status" value="1"/>
</dbReference>
<dbReference type="SUPFAM" id="SSF56801">
    <property type="entry name" value="Acetyl-CoA synthetase-like"/>
    <property type="match status" value="1"/>
</dbReference>
<dbReference type="SUPFAM" id="SSF47336">
    <property type="entry name" value="ACP-like"/>
    <property type="match status" value="1"/>
</dbReference>
<dbReference type="SUPFAM" id="SSF52777">
    <property type="entry name" value="CoA-dependent acyltransferases"/>
    <property type="match status" value="2"/>
</dbReference>
<dbReference type="PROSITE" id="PS00455">
    <property type="entry name" value="AMP_BINDING"/>
    <property type="match status" value="1"/>
</dbReference>
<dbReference type="PROSITE" id="PS50075">
    <property type="entry name" value="CARRIER"/>
    <property type="match status" value="1"/>
</dbReference>
<dbReference type="PROSITE" id="PS00012">
    <property type="entry name" value="PHOSPHOPANTETHEINE"/>
    <property type="match status" value="1"/>
</dbReference>
<comment type="function">
    <text evidence="3 5">Nonribosomal peptide synthetase; part of the gene cluster that mediates the biosynthesis of the tetrahydropyranyl antifungal agent lanomycin that acts as an inhibitor of CYP51 and blocks the ergosterol biosynthesis (PubMed:33857369). The biosynthesis probably begins with the formation of an hexaketide, followed by methionine mediated alkylation of C-2 and C-6, and methylation of the reduced C-3 oxygen, pyran forming reductive ring closure, oxygenation of C-4, beta-keto reduction, enoyl reduction and dehydration of the remaining oxygens, and finally, acylation with glycine to complete the biosynthesis (Probable).</text>
</comment>
<comment type="cofactor">
    <cofactor evidence="2">
        <name>pantetheine 4'-phosphate</name>
        <dbReference type="ChEBI" id="CHEBI:47942"/>
    </cofactor>
</comment>
<comment type="pathway">
    <text evidence="6">Antifungal biosynthesis.</text>
</comment>
<comment type="domain">
    <text evidence="6">NRP synthetases are composed of discrete domains (adenylation (A), thiolation (T) or peptidyl carrier protein (PCP) and condensation (C) domains) which when grouped together are referred to as a single module. Each module is responsible for the recognition (via the A domain) and incorporation of a single amino acid into the growing peptide product. Thus, an NRP synthetase is generally composed of one or more modules and can terminate in a thioesterase domain (TE) that releases the newly synthesized peptide from the enzyme. Occasionally, methyltransferase domains (responsible for amino acid methylation) are present within the NRP synthetase. ORF2 has the monomodular architecture A-T-C.</text>
</comment>
<comment type="similarity">
    <text evidence="5">Belongs to the NRP synthetase family.</text>
</comment>
<keyword id="KW-0436">Ligase</keyword>
<keyword id="KW-0596">Phosphopantetheine</keyword>
<keyword id="KW-0597">Phosphoprotein</keyword>
<feature type="chain" id="PRO_0000461541" description="Nonribosomal peptide synthetase">
    <location>
        <begin position="1"/>
        <end position="1325"/>
    </location>
</feature>
<feature type="domain" description="Carrier" evidence="2">
    <location>
        <begin position="779"/>
        <end position="856"/>
    </location>
</feature>
<feature type="region of interest" description="Adenylation" evidence="1 6">
    <location>
        <begin position="248"/>
        <end position="644"/>
    </location>
</feature>
<feature type="region of interest" description="Condensation" evidence="1 6">
    <location>
        <begin position="893"/>
        <end position="1310"/>
    </location>
</feature>
<feature type="modified residue" description="O-(pantetheine 4'-phosphoryl)serine" evidence="2">
    <location>
        <position position="816"/>
    </location>
</feature>
<gene>
    <name evidence="4" type="primary">ORF2</name>
</gene>
<protein>
    <recommendedName>
        <fullName evidence="4">Nonribosomal peptide synthetase</fullName>
        <ecNumber evidence="6">6.3.2.-</ecNumber>
    </recommendedName>
    <alternativeName>
        <fullName evidence="4">Lanomycin biosynthesis cluster protein 1</fullName>
    </alternativeName>
</protein>
<organism>
    <name type="scientific">Pyrenophora dematioidea</name>
    <name type="common">Helminthosporium dematioideum</name>
    <dbReference type="NCBI Taxonomy" id="139229"/>
    <lineage>
        <taxon>Eukaryota</taxon>
        <taxon>Fungi</taxon>
        <taxon>Dikarya</taxon>
        <taxon>Ascomycota</taxon>
        <taxon>Pezizomycotina</taxon>
        <taxon>Dothideomycetes</taxon>
        <taxon>Pleosporomycetidae</taxon>
        <taxon>Pleosporales</taxon>
        <taxon>Pleosporineae</taxon>
        <taxon>Pleosporaceae</taxon>
        <taxon>Pyrenophora</taxon>
    </lineage>
</organism>
<evidence type="ECO:0000255" key="1"/>
<evidence type="ECO:0000255" key="2">
    <source>
        <dbReference type="PROSITE-ProRule" id="PRU00258"/>
    </source>
</evidence>
<evidence type="ECO:0000269" key="3">
    <source>
    </source>
</evidence>
<evidence type="ECO:0000303" key="4">
    <source>
    </source>
</evidence>
<evidence type="ECO:0000305" key="5"/>
<evidence type="ECO:0000305" key="6">
    <source>
    </source>
</evidence>